<proteinExistence type="inferred from homology"/>
<name>Y856_NEIM0</name>
<reference key="1">
    <citation type="journal article" date="2008" name="Genomics">
        <title>Characterization of ST-4821 complex, a unique Neisseria meningitidis clone.</title>
        <authorList>
            <person name="Peng J."/>
            <person name="Yang L."/>
            <person name="Yang F."/>
            <person name="Yang J."/>
            <person name="Yan Y."/>
            <person name="Nie H."/>
            <person name="Zhang X."/>
            <person name="Xiong Z."/>
            <person name="Jiang Y."/>
            <person name="Cheng F."/>
            <person name="Xu X."/>
            <person name="Chen S."/>
            <person name="Sun L."/>
            <person name="Li W."/>
            <person name="Shen Y."/>
            <person name="Shao Z."/>
            <person name="Liang X."/>
            <person name="Xu J."/>
            <person name="Jin Q."/>
        </authorList>
    </citation>
    <scope>NUCLEOTIDE SEQUENCE [LARGE SCALE GENOMIC DNA]</scope>
    <source>
        <strain>053442</strain>
    </source>
</reference>
<sequence>MFFVLSPAKNLNEKDPAPVSEFTQPDLLAESDILMQQLRELAPQQIAELMHVSDKIALLNAQRNAEWNTPFTPENAKQAVFMFNGDVYEGMDANTLDIGQIRYLQNHVRLLSGLYGLLRPLDLIQPYRLEMGTAFANLRGKNLYEFWGDIITNLLNDTLAQAGSNTLVNLASQEYFKSVNTKKLRARLITPIFKDEKNGKYKIISFYAKRTRGLMVRYAAEHNITDPEMLKNFNYEGYVFNDAASNESEWVFMRSEQIK</sequence>
<evidence type="ECO:0000255" key="1">
    <source>
        <dbReference type="HAMAP-Rule" id="MF_00652"/>
    </source>
</evidence>
<organism>
    <name type="scientific">Neisseria meningitidis serogroup C (strain 053442)</name>
    <dbReference type="NCBI Taxonomy" id="374833"/>
    <lineage>
        <taxon>Bacteria</taxon>
        <taxon>Pseudomonadati</taxon>
        <taxon>Pseudomonadota</taxon>
        <taxon>Betaproteobacteria</taxon>
        <taxon>Neisseriales</taxon>
        <taxon>Neisseriaceae</taxon>
        <taxon>Neisseria</taxon>
    </lineage>
</organism>
<accession>A9M441</accession>
<protein>
    <recommendedName>
        <fullName evidence="1">UPF0246 protein NMCC_0856</fullName>
    </recommendedName>
</protein>
<feature type="chain" id="PRO_1000082770" description="UPF0246 protein NMCC_0856">
    <location>
        <begin position="1"/>
        <end position="259"/>
    </location>
</feature>
<gene>
    <name type="ordered locus">NMCC_0856</name>
</gene>
<comment type="similarity">
    <text evidence="1">Belongs to the UPF0246 family.</text>
</comment>
<dbReference type="EMBL" id="CP000381">
    <property type="protein sequence ID" value="ABX73040.1"/>
    <property type="molecule type" value="Genomic_DNA"/>
</dbReference>
<dbReference type="RefSeq" id="WP_012221528.1">
    <property type="nucleotide sequence ID" value="NC_010120.1"/>
</dbReference>
<dbReference type="SMR" id="A9M441"/>
<dbReference type="KEGG" id="nmn:NMCC_0856"/>
<dbReference type="HOGENOM" id="CLU_061989_0_0_4"/>
<dbReference type="Proteomes" id="UP000001177">
    <property type="component" value="Chromosome"/>
</dbReference>
<dbReference type="GO" id="GO:0005829">
    <property type="term" value="C:cytosol"/>
    <property type="evidence" value="ECO:0007669"/>
    <property type="project" value="TreeGrafter"/>
</dbReference>
<dbReference type="GO" id="GO:0033194">
    <property type="term" value="P:response to hydroperoxide"/>
    <property type="evidence" value="ECO:0007669"/>
    <property type="project" value="TreeGrafter"/>
</dbReference>
<dbReference type="HAMAP" id="MF_00652">
    <property type="entry name" value="UPF0246"/>
    <property type="match status" value="1"/>
</dbReference>
<dbReference type="InterPro" id="IPR005583">
    <property type="entry name" value="YaaA"/>
</dbReference>
<dbReference type="NCBIfam" id="NF002541">
    <property type="entry name" value="PRK02101.1-1"/>
    <property type="match status" value="1"/>
</dbReference>
<dbReference type="NCBIfam" id="NF002542">
    <property type="entry name" value="PRK02101.1-3"/>
    <property type="match status" value="1"/>
</dbReference>
<dbReference type="PANTHER" id="PTHR30283:SF4">
    <property type="entry name" value="PEROXIDE STRESS RESISTANCE PROTEIN YAAA"/>
    <property type="match status" value="1"/>
</dbReference>
<dbReference type="PANTHER" id="PTHR30283">
    <property type="entry name" value="PEROXIDE STRESS RESPONSE PROTEIN YAAA"/>
    <property type="match status" value="1"/>
</dbReference>
<dbReference type="Pfam" id="PF03883">
    <property type="entry name" value="H2O2_YaaD"/>
    <property type="match status" value="1"/>
</dbReference>